<proteinExistence type="inferred from homology"/>
<dbReference type="EC" id="2.8.1.7" evidence="1"/>
<dbReference type="EC" id="4.4.1.16" evidence="1"/>
<dbReference type="EMBL" id="CU928145">
    <property type="protein sequence ID" value="CAU97705.1"/>
    <property type="molecule type" value="Genomic_DNA"/>
</dbReference>
<dbReference type="RefSeq" id="WP_000144575.1">
    <property type="nucleotide sequence ID" value="NC_011748.1"/>
</dbReference>
<dbReference type="SMR" id="B7L5N2"/>
<dbReference type="GeneID" id="75204526"/>
<dbReference type="KEGG" id="eck:EC55989_1847"/>
<dbReference type="HOGENOM" id="CLU_003433_2_5_6"/>
<dbReference type="UniPathway" id="UPA00266"/>
<dbReference type="Proteomes" id="UP000000746">
    <property type="component" value="Chromosome"/>
</dbReference>
<dbReference type="GO" id="GO:0005737">
    <property type="term" value="C:cytoplasm"/>
    <property type="evidence" value="ECO:0007669"/>
    <property type="project" value="UniProtKB-SubCell"/>
</dbReference>
<dbReference type="GO" id="GO:0031071">
    <property type="term" value="F:cysteine desulfurase activity"/>
    <property type="evidence" value="ECO:0007669"/>
    <property type="project" value="UniProtKB-UniRule"/>
</dbReference>
<dbReference type="GO" id="GO:0030170">
    <property type="term" value="F:pyridoxal phosphate binding"/>
    <property type="evidence" value="ECO:0007669"/>
    <property type="project" value="InterPro"/>
</dbReference>
<dbReference type="GO" id="GO:0009000">
    <property type="term" value="F:selenocysteine lyase activity"/>
    <property type="evidence" value="ECO:0007669"/>
    <property type="project" value="UniProtKB-UniRule"/>
</dbReference>
<dbReference type="GO" id="GO:0006534">
    <property type="term" value="P:cysteine metabolic process"/>
    <property type="evidence" value="ECO:0007669"/>
    <property type="project" value="InterPro"/>
</dbReference>
<dbReference type="CDD" id="cd06453">
    <property type="entry name" value="SufS_like"/>
    <property type="match status" value="1"/>
</dbReference>
<dbReference type="FunFam" id="3.40.640.10:FF:000042">
    <property type="entry name" value="Cysteine desulfurase"/>
    <property type="match status" value="1"/>
</dbReference>
<dbReference type="Gene3D" id="3.90.1150.10">
    <property type="entry name" value="Aspartate Aminotransferase, domain 1"/>
    <property type="match status" value="1"/>
</dbReference>
<dbReference type="Gene3D" id="3.40.640.10">
    <property type="entry name" value="Type I PLP-dependent aspartate aminotransferase-like (Major domain)"/>
    <property type="match status" value="1"/>
</dbReference>
<dbReference type="HAMAP" id="MF_01831">
    <property type="entry name" value="SufS_aminotrans_5"/>
    <property type="match status" value="1"/>
</dbReference>
<dbReference type="InterPro" id="IPR000192">
    <property type="entry name" value="Aminotrans_V_dom"/>
</dbReference>
<dbReference type="InterPro" id="IPR020578">
    <property type="entry name" value="Aminotrans_V_PyrdxlP_BS"/>
</dbReference>
<dbReference type="InterPro" id="IPR010970">
    <property type="entry name" value="Cys_dSase_SufS"/>
</dbReference>
<dbReference type="InterPro" id="IPR015424">
    <property type="entry name" value="PyrdxlP-dep_Trfase"/>
</dbReference>
<dbReference type="InterPro" id="IPR015421">
    <property type="entry name" value="PyrdxlP-dep_Trfase_major"/>
</dbReference>
<dbReference type="InterPro" id="IPR015422">
    <property type="entry name" value="PyrdxlP-dep_Trfase_small"/>
</dbReference>
<dbReference type="NCBIfam" id="NF006791">
    <property type="entry name" value="PRK09295.1"/>
    <property type="match status" value="1"/>
</dbReference>
<dbReference type="NCBIfam" id="TIGR01979">
    <property type="entry name" value="sufS"/>
    <property type="match status" value="1"/>
</dbReference>
<dbReference type="PANTHER" id="PTHR43586">
    <property type="entry name" value="CYSTEINE DESULFURASE"/>
    <property type="match status" value="1"/>
</dbReference>
<dbReference type="PANTHER" id="PTHR43586:SF25">
    <property type="entry name" value="CYSTEINE DESULFURASE"/>
    <property type="match status" value="1"/>
</dbReference>
<dbReference type="Pfam" id="PF00266">
    <property type="entry name" value="Aminotran_5"/>
    <property type="match status" value="1"/>
</dbReference>
<dbReference type="SUPFAM" id="SSF53383">
    <property type="entry name" value="PLP-dependent transferases"/>
    <property type="match status" value="1"/>
</dbReference>
<dbReference type="PROSITE" id="PS00595">
    <property type="entry name" value="AA_TRANSFER_CLASS_5"/>
    <property type="match status" value="1"/>
</dbReference>
<keyword id="KW-0963">Cytoplasm</keyword>
<keyword id="KW-0456">Lyase</keyword>
<keyword id="KW-0663">Pyridoxal phosphate</keyword>
<keyword id="KW-1185">Reference proteome</keyword>
<keyword id="KW-0808">Transferase</keyword>
<reference key="1">
    <citation type="journal article" date="2009" name="PLoS Genet.">
        <title>Organised genome dynamics in the Escherichia coli species results in highly diverse adaptive paths.</title>
        <authorList>
            <person name="Touchon M."/>
            <person name="Hoede C."/>
            <person name="Tenaillon O."/>
            <person name="Barbe V."/>
            <person name="Baeriswyl S."/>
            <person name="Bidet P."/>
            <person name="Bingen E."/>
            <person name="Bonacorsi S."/>
            <person name="Bouchier C."/>
            <person name="Bouvet O."/>
            <person name="Calteau A."/>
            <person name="Chiapello H."/>
            <person name="Clermont O."/>
            <person name="Cruveiller S."/>
            <person name="Danchin A."/>
            <person name="Diard M."/>
            <person name="Dossat C."/>
            <person name="Karoui M.E."/>
            <person name="Frapy E."/>
            <person name="Garry L."/>
            <person name="Ghigo J.M."/>
            <person name="Gilles A.M."/>
            <person name="Johnson J."/>
            <person name="Le Bouguenec C."/>
            <person name="Lescat M."/>
            <person name="Mangenot S."/>
            <person name="Martinez-Jehanne V."/>
            <person name="Matic I."/>
            <person name="Nassif X."/>
            <person name="Oztas S."/>
            <person name="Petit M.A."/>
            <person name="Pichon C."/>
            <person name="Rouy Z."/>
            <person name="Ruf C.S."/>
            <person name="Schneider D."/>
            <person name="Tourret J."/>
            <person name="Vacherie B."/>
            <person name="Vallenet D."/>
            <person name="Medigue C."/>
            <person name="Rocha E.P.C."/>
            <person name="Denamur E."/>
        </authorList>
    </citation>
    <scope>NUCLEOTIDE SEQUENCE [LARGE SCALE GENOMIC DNA]</scope>
    <source>
        <strain>55989 / EAEC</strain>
    </source>
</reference>
<organism>
    <name type="scientific">Escherichia coli (strain 55989 / EAEC)</name>
    <dbReference type="NCBI Taxonomy" id="585055"/>
    <lineage>
        <taxon>Bacteria</taxon>
        <taxon>Pseudomonadati</taxon>
        <taxon>Pseudomonadota</taxon>
        <taxon>Gammaproteobacteria</taxon>
        <taxon>Enterobacterales</taxon>
        <taxon>Enterobacteriaceae</taxon>
        <taxon>Escherichia</taxon>
    </lineage>
</organism>
<feature type="chain" id="PRO_1000188293" description="Cysteine desulfurase">
    <location>
        <begin position="1"/>
        <end position="406"/>
    </location>
</feature>
<feature type="active site" description="Cysteine persulfide intermediate" evidence="1">
    <location>
        <position position="364"/>
    </location>
</feature>
<feature type="modified residue" description="N6-(pyridoxal phosphate)lysine" evidence="1">
    <location>
        <position position="226"/>
    </location>
</feature>
<name>SUFS_ECO55</name>
<evidence type="ECO:0000255" key="1">
    <source>
        <dbReference type="HAMAP-Rule" id="MF_01831"/>
    </source>
</evidence>
<accession>B7L5N2</accession>
<gene>
    <name evidence="1" type="primary">sufS</name>
    <name type="ordered locus">EC55989_1847</name>
</gene>
<sequence>MTFSVDKVRADFPVLSREVNGLPLAYLDSAASAQKPSQVIDAEAEFYRHGYAAVHRGIHTLSAQATEKMENVRKRASLFINARSAEELVFVRGTTEGINLVANSWGNSNVRAGDNIIISQMEHHANIVPWQMLCARVGAELRVIPLNPDGTLQLETLPTLFDEKTRLLAITHVSNVLGTENPLAEMITLAHQHGAKVLVDGAQAVMHHPVDVQALDCDFYVFSGHKLYGPTGIGILYVKEALLQEMPPWEGGGSMIATVSLSEGTTWTKAPWRFEAGTPNTGGIIGLGAALEYVSALGLNNIAEYEQNLMHYALSQLESVPDLTLYGPQNRLGVIAFNLGKHHAYDVGSFLDNYGIAVRTGHHCAMPLMAYYNVPAMCRASLAMYNTHEEVDRLVTGLQRIHRLLG</sequence>
<protein>
    <recommendedName>
        <fullName evidence="1">Cysteine desulfurase</fullName>
        <ecNumber evidence="1">2.8.1.7</ecNumber>
    </recommendedName>
    <alternativeName>
        <fullName evidence="1">Selenocysteine beta-lyase</fullName>
        <shortName evidence="1">SCL</shortName>
    </alternativeName>
    <alternativeName>
        <fullName evidence="1">Selenocysteine lyase</fullName>
        <ecNumber evidence="1">4.4.1.16</ecNumber>
    </alternativeName>
    <alternativeName>
        <fullName evidence="1">Selenocysteine reductase</fullName>
    </alternativeName>
</protein>
<comment type="function">
    <text evidence="1">Cysteine desulfurases mobilize the sulfur from L-cysteine to yield L-alanine, an essential step in sulfur metabolism for biosynthesis of a variety of sulfur-containing biomolecules. Component of the suf operon, which is activated and required under specific conditions such as oxidative stress and iron limitation. Acts as a potent selenocysteine lyase in vitro, that mobilizes selenium from L-selenocysteine. Selenocysteine lyase activity is however unsure in vivo.</text>
</comment>
<comment type="catalytic activity">
    <reaction evidence="1">
        <text>(sulfur carrier)-H + L-cysteine = (sulfur carrier)-SH + L-alanine</text>
        <dbReference type="Rhea" id="RHEA:43892"/>
        <dbReference type="Rhea" id="RHEA-COMP:14737"/>
        <dbReference type="Rhea" id="RHEA-COMP:14739"/>
        <dbReference type="ChEBI" id="CHEBI:29917"/>
        <dbReference type="ChEBI" id="CHEBI:35235"/>
        <dbReference type="ChEBI" id="CHEBI:57972"/>
        <dbReference type="ChEBI" id="CHEBI:64428"/>
        <dbReference type="EC" id="2.8.1.7"/>
    </reaction>
</comment>
<comment type="catalytic activity">
    <reaction evidence="1">
        <text>L-selenocysteine + AH2 = hydrogenselenide + L-alanine + A + H(+)</text>
        <dbReference type="Rhea" id="RHEA:11632"/>
        <dbReference type="ChEBI" id="CHEBI:13193"/>
        <dbReference type="ChEBI" id="CHEBI:15378"/>
        <dbReference type="ChEBI" id="CHEBI:17499"/>
        <dbReference type="ChEBI" id="CHEBI:29317"/>
        <dbReference type="ChEBI" id="CHEBI:57843"/>
        <dbReference type="ChEBI" id="CHEBI:57972"/>
        <dbReference type="EC" id="4.4.1.16"/>
    </reaction>
</comment>
<comment type="cofactor">
    <cofactor evidence="1">
        <name>pyridoxal 5'-phosphate</name>
        <dbReference type="ChEBI" id="CHEBI:597326"/>
    </cofactor>
</comment>
<comment type="pathway">
    <text evidence="1">Cofactor biosynthesis; iron-sulfur cluster biosynthesis.</text>
</comment>
<comment type="subunit">
    <text evidence="1">Homodimer. Interacts with SufE and the SufBCD complex composed of SufB, SufC and SufD. The interaction with SufE is required to mediate the direct transfer of the sulfur atom from the S-sulfanylcysteine.</text>
</comment>
<comment type="subcellular location">
    <subcellularLocation>
        <location evidence="1">Cytoplasm</location>
    </subcellularLocation>
</comment>
<comment type="similarity">
    <text evidence="1">Belongs to the class-V pyridoxal-phosphate-dependent aminotransferase family. Csd subfamily.</text>
</comment>